<keyword id="KW-0687">Ribonucleoprotein</keyword>
<keyword id="KW-0689">Ribosomal protein</keyword>
<keyword id="KW-0694">RNA-binding</keyword>
<keyword id="KW-0699">rRNA-binding</keyword>
<comment type="function">
    <text evidence="1">One of two assembly initiator proteins, it binds directly to the 5'-end of the 23S rRNA, where it nucleates assembly of the 50S subunit.</text>
</comment>
<comment type="function">
    <text evidence="1">One of the proteins that surrounds the polypeptide exit tunnel on the outside of the subunit.</text>
</comment>
<comment type="subunit">
    <text>Part of the 50S ribosomal subunit.</text>
</comment>
<comment type="similarity">
    <text evidence="2">Belongs to the universal ribosomal protein uL24 family.</text>
</comment>
<organism>
    <name type="scientific">Spiroplasma citri</name>
    <dbReference type="NCBI Taxonomy" id="2133"/>
    <lineage>
        <taxon>Bacteria</taxon>
        <taxon>Bacillati</taxon>
        <taxon>Mycoplasmatota</taxon>
        <taxon>Mollicutes</taxon>
        <taxon>Entomoplasmatales</taxon>
        <taxon>Spiroplasmataceae</taxon>
        <taxon>Spiroplasma</taxon>
    </lineage>
</organism>
<protein>
    <recommendedName>
        <fullName evidence="2">Large ribosomal subunit protein uL24</fullName>
    </recommendedName>
    <alternativeName>
        <fullName>50S ribosomal protein L24</fullName>
    </alternativeName>
</protein>
<gene>
    <name type="primary">rplX</name>
</gene>
<dbReference type="EMBL" id="AF031160">
    <property type="protein sequence ID" value="AAC35875.1"/>
    <property type="molecule type" value="Genomic_DNA"/>
</dbReference>
<dbReference type="SMR" id="O31166"/>
<dbReference type="STRING" id="2133.SCITRI_00342"/>
<dbReference type="GO" id="GO:1990904">
    <property type="term" value="C:ribonucleoprotein complex"/>
    <property type="evidence" value="ECO:0007669"/>
    <property type="project" value="UniProtKB-KW"/>
</dbReference>
<dbReference type="GO" id="GO:0005840">
    <property type="term" value="C:ribosome"/>
    <property type="evidence" value="ECO:0007669"/>
    <property type="project" value="UniProtKB-KW"/>
</dbReference>
<dbReference type="GO" id="GO:0019843">
    <property type="term" value="F:rRNA binding"/>
    <property type="evidence" value="ECO:0007669"/>
    <property type="project" value="UniProtKB-KW"/>
</dbReference>
<dbReference type="GO" id="GO:0003735">
    <property type="term" value="F:structural constituent of ribosome"/>
    <property type="evidence" value="ECO:0007669"/>
    <property type="project" value="InterPro"/>
</dbReference>
<dbReference type="GO" id="GO:0006412">
    <property type="term" value="P:translation"/>
    <property type="evidence" value="ECO:0007669"/>
    <property type="project" value="InterPro"/>
</dbReference>
<dbReference type="CDD" id="cd06089">
    <property type="entry name" value="KOW_RPL26"/>
    <property type="match status" value="1"/>
</dbReference>
<dbReference type="Gene3D" id="2.30.30.30">
    <property type="match status" value="1"/>
</dbReference>
<dbReference type="InterPro" id="IPR005824">
    <property type="entry name" value="KOW"/>
</dbReference>
<dbReference type="InterPro" id="IPR014722">
    <property type="entry name" value="Rib_uL2_dom2"/>
</dbReference>
<dbReference type="InterPro" id="IPR003256">
    <property type="entry name" value="Ribosomal_uL24"/>
</dbReference>
<dbReference type="InterPro" id="IPR005825">
    <property type="entry name" value="Ribosomal_uL24_CS"/>
</dbReference>
<dbReference type="InterPro" id="IPR041988">
    <property type="entry name" value="Ribosomal_uL24_KOW"/>
</dbReference>
<dbReference type="InterPro" id="IPR008991">
    <property type="entry name" value="Translation_prot_SH3-like_sf"/>
</dbReference>
<dbReference type="PANTHER" id="PTHR12903">
    <property type="entry name" value="MITOCHONDRIAL RIBOSOMAL PROTEIN L24"/>
    <property type="match status" value="1"/>
</dbReference>
<dbReference type="Pfam" id="PF00467">
    <property type="entry name" value="KOW"/>
    <property type="match status" value="1"/>
</dbReference>
<dbReference type="SMART" id="SM00739">
    <property type="entry name" value="KOW"/>
    <property type="match status" value="1"/>
</dbReference>
<dbReference type="SUPFAM" id="SSF50104">
    <property type="entry name" value="Translation proteins SH3-like domain"/>
    <property type="match status" value="1"/>
</dbReference>
<dbReference type="PROSITE" id="PS01108">
    <property type="entry name" value="RIBOSOMAL_L24"/>
    <property type="match status" value="1"/>
</dbReference>
<sequence length="58" mass="6408">MDKVKFKKGDLVKVIAGKHKGTEGPIIRVLREKSRVVIEGITNIKHVKPSQDNTEAGI</sequence>
<accession>O31166</accession>
<proteinExistence type="inferred from homology"/>
<evidence type="ECO:0000250" key="1"/>
<evidence type="ECO:0000305" key="2"/>
<name>RL24_SPICI</name>
<feature type="chain" id="PRO_0000130712" description="Large ribosomal subunit protein uL24">
    <location>
        <begin position="1"/>
        <end position="58" status="greater than"/>
    </location>
</feature>
<feature type="non-terminal residue">
    <location>
        <position position="58"/>
    </location>
</feature>
<reference key="1">
    <citation type="journal article" date="1998" name="J. Biol. Chem.">
        <title>Purification, cloning, and preliminary characterization of a Spiroplasma citri ribosomal protein with DNA binding capacity.</title>
        <authorList>
            <person name="Le Dantec L."/>
            <person name="Castroviejo M."/>
            <person name="Bove J.M."/>
            <person name="Saillard C."/>
        </authorList>
    </citation>
    <scope>NUCLEOTIDE SEQUENCE [GENOMIC DNA]</scope>
    <source>
        <strain>ATCC 27556 / NCPPB 2647 / R8A2</strain>
    </source>
</reference>